<organism>
    <name type="scientific">Homo sapiens</name>
    <name type="common">Human</name>
    <dbReference type="NCBI Taxonomy" id="9606"/>
    <lineage>
        <taxon>Eukaryota</taxon>
        <taxon>Metazoa</taxon>
        <taxon>Chordata</taxon>
        <taxon>Craniata</taxon>
        <taxon>Vertebrata</taxon>
        <taxon>Euteleostomi</taxon>
        <taxon>Mammalia</taxon>
        <taxon>Eutheria</taxon>
        <taxon>Euarchontoglires</taxon>
        <taxon>Primates</taxon>
        <taxon>Haplorrhini</taxon>
        <taxon>Catarrhini</taxon>
        <taxon>Hominidae</taxon>
        <taxon>Homo</taxon>
    </lineage>
</organism>
<accession>P59544</accession>
<accession>P59545</accession>
<accession>Q2M255</accession>
<accession>Q645Y0</accession>
<gene>
    <name type="primary">TAS2R50</name>
</gene>
<name>T2R50_HUMAN</name>
<protein>
    <recommendedName>
        <fullName>Taste receptor type 2 member 50</fullName>
        <shortName>T2R50</shortName>
    </recommendedName>
    <alternativeName>
        <fullName>Taste receptor type 2 member 51</fullName>
        <shortName>T2R51</shortName>
    </alternativeName>
</protein>
<proteinExistence type="evidence at transcript level"/>
<feature type="chain" id="PRO_0000082337" description="Taste receptor type 2 member 50">
    <location>
        <begin position="1"/>
        <end position="299"/>
    </location>
</feature>
<feature type="topological domain" description="Extracellular" evidence="2">
    <location>
        <position position="1"/>
    </location>
</feature>
<feature type="transmembrane region" description="Helical; Name=1" evidence="2">
    <location>
        <begin position="2"/>
        <end position="22"/>
    </location>
</feature>
<feature type="topological domain" description="Cytoplasmic" evidence="2">
    <location>
        <begin position="23"/>
        <end position="55"/>
    </location>
</feature>
<feature type="transmembrane region" description="Helical; Name=2" evidence="2">
    <location>
        <begin position="56"/>
        <end position="76"/>
    </location>
</feature>
<feature type="topological domain" description="Extracellular" evidence="2">
    <location>
        <begin position="77"/>
        <end position="87"/>
    </location>
</feature>
<feature type="transmembrane region" description="Helical; Name=3" evidence="2">
    <location>
        <begin position="88"/>
        <end position="108"/>
    </location>
</feature>
<feature type="topological domain" description="Cytoplasmic" evidence="2">
    <location>
        <begin position="109"/>
        <end position="126"/>
    </location>
</feature>
<feature type="transmembrane region" description="Helical; Name=4" evidence="2">
    <location>
        <begin position="127"/>
        <end position="147"/>
    </location>
</feature>
<feature type="topological domain" description="Extracellular" evidence="2">
    <location>
        <begin position="148"/>
        <end position="181"/>
    </location>
</feature>
<feature type="transmembrane region" description="Helical; Name=5" evidence="2">
    <location>
        <begin position="182"/>
        <end position="202"/>
    </location>
</feature>
<feature type="topological domain" description="Cytoplasmic" evidence="2">
    <location>
        <begin position="203"/>
        <end position="229"/>
    </location>
</feature>
<feature type="transmembrane region" description="Helical; Name=6" evidence="2">
    <location>
        <begin position="230"/>
        <end position="250"/>
    </location>
</feature>
<feature type="topological domain" description="Extracellular" evidence="2">
    <location>
        <begin position="251"/>
        <end position="259"/>
    </location>
</feature>
<feature type="transmembrane region" description="Helical; Name=7" evidence="2">
    <location>
        <begin position="260"/>
        <end position="280"/>
    </location>
</feature>
<feature type="topological domain" description="Cytoplasmic" evidence="2">
    <location>
        <begin position="281"/>
        <end position="299"/>
    </location>
</feature>
<feature type="glycosylation site" description="N-linked (GlcNAc...) asparagine" evidence="2">
    <location>
        <position position="161"/>
    </location>
</feature>
<feature type="sequence variant" id="VAR_024187" description="In dbSNP:rs1376251." evidence="3">
    <original>C</original>
    <variation>Y</variation>
    <location>
        <position position="203"/>
    </location>
</feature>
<evidence type="ECO:0000250" key="1"/>
<evidence type="ECO:0000255" key="2"/>
<evidence type="ECO:0000269" key="3">
    <source>
    </source>
</evidence>
<evidence type="ECO:0000305" key="4"/>
<sequence length="299" mass="34558">MITFLYIFFSILIMVLFVLGNFANGFIALVNFIDWVKRKKISSADQILTALAVSRIGLLWALLLNWYLTVLNPAFYSVELRITSYNAWVVTNHFSMWLAANLSIFYLLKIANFSNLLFLHLKRRVRSVILVILLGTLIFLVCHLLVANMDESMWAEEYEGNMTGKMKLRNTVHLSYLTVTTLWSFIPFTLSLISFLMLICSLCKHLKKMQLHGEGSQDLSTKVHIKALQTLISFLLLCAIFFLFLIVSVWSPRRLRNDPVVMVSKAVGNIYLAFDSFILIWRTKKLKHTFLLILCQIRC</sequence>
<dbReference type="EMBL" id="AF494235">
    <property type="protein sequence ID" value="AAM19326.1"/>
    <property type="molecule type" value="Genomic_DNA"/>
</dbReference>
<dbReference type="EMBL" id="AY114088">
    <property type="protein sequence ID" value="AAM63538.1"/>
    <property type="molecule type" value="Genomic_DNA"/>
</dbReference>
<dbReference type="EMBL" id="AY724937">
    <property type="protein sequence ID" value="AAU21139.1"/>
    <property type="molecule type" value="Genomic_DNA"/>
</dbReference>
<dbReference type="EMBL" id="AC018630">
    <property type="status" value="NOT_ANNOTATED_CDS"/>
    <property type="molecule type" value="Genomic_DNA"/>
</dbReference>
<dbReference type="EMBL" id="BC112100">
    <property type="protein sequence ID" value="AAI12101.1"/>
    <property type="molecule type" value="mRNA"/>
</dbReference>
<dbReference type="CCDS" id="CCDS8638.1"/>
<dbReference type="RefSeq" id="NP_795371.2">
    <property type="nucleotide sequence ID" value="NM_176890.2"/>
</dbReference>
<dbReference type="SMR" id="P59544"/>
<dbReference type="BioGRID" id="129251">
    <property type="interactions" value="26"/>
</dbReference>
<dbReference type="FunCoup" id="P59544">
    <property type="interactions" value="233"/>
</dbReference>
<dbReference type="IntAct" id="P59544">
    <property type="interactions" value="2"/>
</dbReference>
<dbReference type="STRING" id="9606.ENSP00000424040"/>
<dbReference type="ChEMBL" id="CHEMBL3559706"/>
<dbReference type="DrugCentral" id="P59544"/>
<dbReference type="GuidetoPHARMACOLOGY" id="677"/>
<dbReference type="GlyCosmos" id="P59544">
    <property type="glycosylation" value="1 site, No reported glycans"/>
</dbReference>
<dbReference type="GlyGen" id="P59544">
    <property type="glycosylation" value="1 site"/>
</dbReference>
<dbReference type="BioMuta" id="TAS2R50"/>
<dbReference type="DMDM" id="296452919"/>
<dbReference type="PaxDb" id="9606-ENSP00000424040"/>
<dbReference type="Antibodypedia" id="23416">
    <property type="antibodies" value="46 antibodies from 14 providers"/>
</dbReference>
<dbReference type="DNASU" id="259296"/>
<dbReference type="Ensembl" id="ENST00000506868.1">
    <property type="protein sequence ID" value="ENSP00000424040.1"/>
    <property type="gene ID" value="ENSG00000212126.3"/>
</dbReference>
<dbReference type="Ensembl" id="ENST00000575654.1">
    <property type="protein sequence ID" value="ENSP00000458551.1"/>
    <property type="gene ID" value="ENSG00000273431.1"/>
</dbReference>
<dbReference type="Ensembl" id="ENST00000613831.1">
    <property type="protein sequence ID" value="ENSP00000479785.1"/>
    <property type="gene ID" value="ENSG00000276167.1"/>
</dbReference>
<dbReference type="GeneID" id="259296"/>
<dbReference type="KEGG" id="hsa:259296"/>
<dbReference type="MANE-Select" id="ENST00000506868.1">
    <property type="protein sequence ID" value="ENSP00000424040.1"/>
    <property type="RefSeq nucleotide sequence ID" value="NM_176890.2"/>
    <property type="RefSeq protein sequence ID" value="NP_795371.2"/>
</dbReference>
<dbReference type="UCSC" id="uc001qzl.2">
    <property type="organism name" value="human"/>
</dbReference>
<dbReference type="AGR" id="HGNC:18882"/>
<dbReference type="CTD" id="259296"/>
<dbReference type="DisGeNET" id="259296"/>
<dbReference type="GeneCards" id="TAS2R50"/>
<dbReference type="HGNC" id="HGNC:18882">
    <property type="gene designation" value="TAS2R50"/>
</dbReference>
<dbReference type="HPA" id="ENSG00000212126">
    <property type="expression patterns" value="Not detected"/>
</dbReference>
<dbReference type="MIM" id="609627">
    <property type="type" value="gene"/>
</dbReference>
<dbReference type="neXtProt" id="NX_P59544"/>
<dbReference type="OpenTargets" id="ENSG00000212126"/>
<dbReference type="PharmGKB" id="PA38736"/>
<dbReference type="VEuPathDB" id="HostDB:ENSG00000212126"/>
<dbReference type="eggNOG" id="ENOG502TE6U">
    <property type="taxonomic scope" value="Eukaryota"/>
</dbReference>
<dbReference type="GeneTree" id="ENSGT01100000263477"/>
<dbReference type="HOGENOM" id="CLU_072337_2_0_1"/>
<dbReference type="InParanoid" id="P59544"/>
<dbReference type="OMA" id="ILCQIRC"/>
<dbReference type="OrthoDB" id="8876749at2759"/>
<dbReference type="PAN-GO" id="P59544">
    <property type="GO annotations" value="3 GO annotations based on evolutionary models"/>
</dbReference>
<dbReference type="PhylomeDB" id="P59544"/>
<dbReference type="TreeFam" id="TF335891"/>
<dbReference type="PathwayCommons" id="P59544"/>
<dbReference type="Reactome" id="R-HSA-418594">
    <property type="pathway name" value="G alpha (i) signalling events"/>
</dbReference>
<dbReference type="Reactome" id="R-HSA-420499">
    <property type="pathway name" value="Class C/3 (Metabotropic glutamate/pheromone receptors)"/>
</dbReference>
<dbReference type="Reactome" id="R-HSA-9717207">
    <property type="pathway name" value="Sensory perception of sweet, bitter, and umami (glutamate) taste"/>
</dbReference>
<dbReference type="BioGRID-ORCS" id="259296">
    <property type="hits" value="12 hits in 1101 CRISPR screens"/>
</dbReference>
<dbReference type="GeneWiki" id="TAS2R50"/>
<dbReference type="GenomeRNAi" id="259296"/>
<dbReference type="Pharos" id="P59544">
    <property type="development level" value="Tchem"/>
</dbReference>
<dbReference type="PRO" id="PR:P59544"/>
<dbReference type="Proteomes" id="UP000005640">
    <property type="component" value="Chromosome 12"/>
</dbReference>
<dbReference type="RNAct" id="P59544">
    <property type="molecule type" value="protein"/>
</dbReference>
<dbReference type="Bgee" id="ENSG00000212126">
    <property type="expression patterns" value="Expressed in male germ line stem cell (sensu Vertebrata) in testis and 34 other cell types or tissues"/>
</dbReference>
<dbReference type="GO" id="GO:0016020">
    <property type="term" value="C:membrane"/>
    <property type="evidence" value="ECO:0000318"/>
    <property type="project" value="GO_Central"/>
</dbReference>
<dbReference type="GO" id="GO:0005886">
    <property type="term" value="C:plasma membrane"/>
    <property type="evidence" value="ECO:0000304"/>
    <property type="project" value="Reactome"/>
</dbReference>
<dbReference type="GO" id="GO:0033038">
    <property type="term" value="F:bitter taste receptor activity"/>
    <property type="evidence" value="ECO:0000314"/>
    <property type="project" value="UniProtKB"/>
</dbReference>
<dbReference type="GO" id="GO:0004930">
    <property type="term" value="F:G protein-coupled receptor activity"/>
    <property type="evidence" value="ECO:0007669"/>
    <property type="project" value="UniProtKB-KW"/>
</dbReference>
<dbReference type="GO" id="GO:0001580">
    <property type="term" value="P:detection of chemical stimulus involved in sensory perception of bitter taste"/>
    <property type="evidence" value="ECO:0000314"/>
    <property type="project" value="UniProtKB"/>
</dbReference>
<dbReference type="CDD" id="cd15027">
    <property type="entry name" value="7tm_TAS2R43-like"/>
    <property type="match status" value="1"/>
</dbReference>
<dbReference type="FunFam" id="1.20.1070.10:FF:000042">
    <property type="entry name" value="Taste receptor type 2 member 7"/>
    <property type="match status" value="1"/>
</dbReference>
<dbReference type="Gene3D" id="1.20.1070.10">
    <property type="entry name" value="Rhodopsin 7-helix transmembrane proteins"/>
    <property type="match status" value="1"/>
</dbReference>
<dbReference type="InterPro" id="IPR007960">
    <property type="entry name" value="TAS2R"/>
</dbReference>
<dbReference type="PANTHER" id="PTHR11394">
    <property type="entry name" value="TASTE RECEPTOR TYPE 2"/>
    <property type="match status" value="1"/>
</dbReference>
<dbReference type="PANTHER" id="PTHR11394:SF43">
    <property type="entry name" value="TASTE RECEPTOR TYPE 2 MEMBER 50"/>
    <property type="match status" value="1"/>
</dbReference>
<dbReference type="Pfam" id="PF05296">
    <property type="entry name" value="TAS2R"/>
    <property type="match status" value="1"/>
</dbReference>
<dbReference type="SUPFAM" id="SSF81321">
    <property type="entry name" value="Family A G protein-coupled receptor-like"/>
    <property type="match status" value="1"/>
</dbReference>
<keyword id="KW-0297">G-protein coupled receptor</keyword>
<keyword id="KW-0325">Glycoprotein</keyword>
<keyword id="KW-0472">Membrane</keyword>
<keyword id="KW-0675">Receptor</keyword>
<keyword id="KW-1185">Reference proteome</keyword>
<keyword id="KW-0716">Sensory transduction</keyword>
<keyword id="KW-0919">Taste</keyword>
<keyword id="KW-0807">Transducer</keyword>
<keyword id="KW-0812">Transmembrane</keyword>
<keyword id="KW-1133">Transmembrane helix</keyword>
<comment type="function">
    <text evidence="1">Receptor that may play a role in the perception of bitterness and is gustducin-linked. May play a role in sensing the chemical composition of the gastrointestinal content. The activity of this receptor may stimulate alpha gustducin, mediate PLC-beta-2 activation and lead to the gating of TRPM5 (By similarity).</text>
</comment>
<comment type="subcellular location">
    <subcellularLocation>
        <location>Membrane</location>
        <topology>Multi-pass membrane protein</topology>
    </subcellularLocation>
</comment>
<comment type="tissue specificity">
    <text>Expressed in subsets of taste receptor cells of the tongue and exclusively in gustducin-positive cells.</text>
</comment>
<comment type="miscellaneous">
    <text>Most taste cells may be activated by a limited number of bitter compounds; individual taste cells can discriminate among bitter stimuli.</text>
</comment>
<comment type="similarity">
    <text evidence="4">Belongs to the G-protein coupled receptor T2R family.</text>
</comment>
<reference key="1">
    <citation type="journal article" date="2002" name="Nat. Genet.">
        <title>The human TAS2R16 receptor mediates bitter taste in response to beta-glucopyranosides.</title>
        <authorList>
            <person name="Bufe B."/>
            <person name="Hofmann T."/>
            <person name="Krautwurst D."/>
            <person name="Raguse J.-D."/>
            <person name="Meyerhof W."/>
        </authorList>
    </citation>
    <scope>NUCLEOTIDE SEQUENCE [GENOMIC DNA]</scope>
    <scope>VARIANT TYR-203</scope>
</reference>
<reference key="2">
    <citation type="journal article" date="2002" name="Cytogenet. Genome Res.">
        <title>Identification and characterization of human taste receptor genes belonging to the TAS2R family.</title>
        <authorList>
            <person name="Conte C."/>
            <person name="Ebeling M."/>
            <person name="Marcuz A."/>
            <person name="Nef P."/>
            <person name="Andres-Barquin P.J."/>
        </authorList>
    </citation>
    <scope>NUCLEOTIDE SEQUENCE [GENOMIC DNA]</scope>
</reference>
<reference key="3">
    <citation type="journal article" date="2005" name="Mol. Biol. Evol.">
        <title>Evolution of bitter taste receptors in humans and apes.</title>
        <authorList>
            <person name="Fischer A."/>
            <person name="Gilad Y."/>
            <person name="Man O."/>
            <person name="Paeaebo S."/>
        </authorList>
    </citation>
    <scope>NUCLEOTIDE SEQUENCE [GENOMIC DNA]</scope>
</reference>
<reference key="4">
    <citation type="journal article" date="2006" name="Nature">
        <title>The finished DNA sequence of human chromosome 12.</title>
        <authorList>
            <person name="Scherer S.E."/>
            <person name="Muzny D.M."/>
            <person name="Buhay C.J."/>
            <person name="Chen R."/>
            <person name="Cree A."/>
            <person name="Ding Y."/>
            <person name="Dugan-Rocha S."/>
            <person name="Gill R."/>
            <person name="Gunaratne P."/>
            <person name="Harris R.A."/>
            <person name="Hawes A.C."/>
            <person name="Hernandez J."/>
            <person name="Hodgson A.V."/>
            <person name="Hume J."/>
            <person name="Jackson A."/>
            <person name="Khan Z.M."/>
            <person name="Kovar-Smith C."/>
            <person name="Lewis L.R."/>
            <person name="Lozado R.J."/>
            <person name="Metzker M.L."/>
            <person name="Milosavljevic A."/>
            <person name="Miner G.R."/>
            <person name="Montgomery K.T."/>
            <person name="Morgan M.B."/>
            <person name="Nazareth L.V."/>
            <person name="Scott G."/>
            <person name="Sodergren E."/>
            <person name="Song X.-Z."/>
            <person name="Steffen D."/>
            <person name="Lovering R.C."/>
            <person name="Wheeler D.A."/>
            <person name="Worley K.C."/>
            <person name="Yuan Y."/>
            <person name="Zhang Z."/>
            <person name="Adams C.Q."/>
            <person name="Ansari-Lari M.A."/>
            <person name="Ayele M."/>
            <person name="Brown M.J."/>
            <person name="Chen G."/>
            <person name="Chen Z."/>
            <person name="Clerc-Blankenburg K.P."/>
            <person name="Davis C."/>
            <person name="Delgado O."/>
            <person name="Dinh H.H."/>
            <person name="Draper H."/>
            <person name="Gonzalez-Garay M.L."/>
            <person name="Havlak P."/>
            <person name="Jackson L.R."/>
            <person name="Jacob L.S."/>
            <person name="Kelly S.H."/>
            <person name="Li L."/>
            <person name="Li Z."/>
            <person name="Liu J."/>
            <person name="Liu W."/>
            <person name="Lu J."/>
            <person name="Maheshwari M."/>
            <person name="Nguyen B.-V."/>
            <person name="Okwuonu G.O."/>
            <person name="Pasternak S."/>
            <person name="Perez L.M."/>
            <person name="Plopper F.J.H."/>
            <person name="Santibanez J."/>
            <person name="Shen H."/>
            <person name="Tabor P.E."/>
            <person name="Verduzco D."/>
            <person name="Waldron L."/>
            <person name="Wang Q."/>
            <person name="Williams G.A."/>
            <person name="Zhang J."/>
            <person name="Zhou J."/>
            <person name="Allen C.C."/>
            <person name="Amin A.G."/>
            <person name="Anyalebechi V."/>
            <person name="Bailey M."/>
            <person name="Barbaria J.A."/>
            <person name="Bimage K.E."/>
            <person name="Bryant N.P."/>
            <person name="Burch P.E."/>
            <person name="Burkett C.E."/>
            <person name="Burrell K.L."/>
            <person name="Calderon E."/>
            <person name="Cardenas V."/>
            <person name="Carter K."/>
            <person name="Casias K."/>
            <person name="Cavazos I."/>
            <person name="Cavazos S.R."/>
            <person name="Ceasar H."/>
            <person name="Chacko J."/>
            <person name="Chan S.N."/>
            <person name="Chavez D."/>
            <person name="Christopoulos C."/>
            <person name="Chu J."/>
            <person name="Cockrell R."/>
            <person name="Cox C.D."/>
            <person name="Dang M."/>
            <person name="Dathorne S.R."/>
            <person name="David R."/>
            <person name="Davis C.M."/>
            <person name="Davy-Carroll L."/>
            <person name="Deshazo D.R."/>
            <person name="Donlin J.E."/>
            <person name="D'Souza L."/>
            <person name="Eaves K.A."/>
            <person name="Egan A."/>
            <person name="Emery-Cohen A.J."/>
            <person name="Escotto M."/>
            <person name="Flagg N."/>
            <person name="Forbes L.D."/>
            <person name="Gabisi A.M."/>
            <person name="Garza M."/>
            <person name="Hamilton C."/>
            <person name="Henderson N."/>
            <person name="Hernandez O."/>
            <person name="Hines S."/>
            <person name="Hogues M.E."/>
            <person name="Huang M."/>
            <person name="Idlebird D.G."/>
            <person name="Johnson R."/>
            <person name="Jolivet A."/>
            <person name="Jones S."/>
            <person name="Kagan R."/>
            <person name="King L.M."/>
            <person name="Leal B."/>
            <person name="Lebow H."/>
            <person name="Lee S."/>
            <person name="LeVan J.M."/>
            <person name="Lewis L.C."/>
            <person name="London P."/>
            <person name="Lorensuhewa L.M."/>
            <person name="Loulseged H."/>
            <person name="Lovett D.A."/>
            <person name="Lucier A."/>
            <person name="Lucier R.L."/>
            <person name="Ma J."/>
            <person name="Madu R.C."/>
            <person name="Mapua P."/>
            <person name="Martindale A.D."/>
            <person name="Martinez E."/>
            <person name="Massey E."/>
            <person name="Mawhiney S."/>
            <person name="Meador M.G."/>
            <person name="Mendez S."/>
            <person name="Mercado C."/>
            <person name="Mercado I.C."/>
            <person name="Merritt C.E."/>
            <person name="Miner Z.L."/>
            <person name="Minja E."/>
            <person name="Mitchell T."/>
            <person name="Mohabbat F."/>
            <person name="Mohabbat K."/>
            <person name="Montgomery B."/>
            <person name="Moore N."/>
            <person name="Morris S."/>
            <person name="Munidasa M."/>
            <person name="Ngo R.N."/>
            <person name="Nguyen N.B."/>
            <person name="Nickerson E."/>
            <person name="Nwaokelemeh O.O."/>
            <person name="Nwokenkwo S."/>
            <person name="Obregon M."/>
            <person name="Oguh M."/>
            <person name="Oragunye N."/>
            <person name="Oviedo R.J."/>
            <person name="Parish B.J."/>
            <person name="Parker D.N."/>
            <person name="Parrish J."/>
            <person name="Parks K.L."/>
            <person name="Paul H.A."/>
            <person name="Payton B.A."/>
            <person name="Perez A."/>
            <person name="Perrin W."/>
            <person name="Pickens A."/>
            <person name="Primus E.L."/>
            <person name="Pu L.-L."/>
            <person name="Puazo M."/>
            <person name="Quiles M.M."/>
            <person name="Quiroz J.B."/>
            <person name="Rabata D."/>
            <person name="Reeves K."/>
            <person name="Ruiz S.J."/>
            <person name="Shao H."/>
            <person name="Sisson I."/>
            <person name="Sonaike T."/>
            <person name="Sorelle R.P."/>
            <person name="Sutton A.E."/>
            <person name="Svatek A.F."/>
            <person name="Svetz L.A."/>
            <person name="Tamerisa K.S."/>
            <person name="Taylor T.R."/>
            <person name="Teague B."/>
            <person name="Thomas N."/>
            <person name="Thorn R.D."/>
            <person name="Trejos Z.Y."/>
            <person name="Trevino B.K."/>
            <person name="Ukegbu O.N."/>
            <person name="Urban J.B."/>
            <person name="Vasquez L.I."/>
            <person name="Vera V.A."/>
            <person name="Villasana D.M."/>
            <person name="Wang L."/>
            <person name="Ward-Moore S."/>
            <person name="Warren J.T."/>
            <person name="Wei X."/>
            <person name="White F."/>
            <person name="Williamson A.L."/>
            <person name="Wleczyk R."/>
            <person name="Wooden H.S."/>
            <person name="Wooden S.H."/>
            <person name="Yen J."/>
            <person name="Yoon L."/>
            <person name="Yoon V."/>
            <person name="Zorrilla S.E."/>
            <person name="Nelson D."/>
            <person name="Kucherlapati R."/>
            <person name="Weinstock G."/>
            <person name="Gibbs R.A."/>
        </authorList>
    </citation>
    <scope>NUCLEOTIDE SEQUENCE [LARGE SCALE GENOMIC DNA]</scope>
</reference>
<reference key="5">
    <citation type="journal article" date="2004" name="Genome Res.">
        <title>The status, quality, and expansion of the NIH full-length cDNA project: the Mammalian Gene Collection (MGC).</title>
        <authorList>
            <consortium name="The MGC Project Team"/>
        </authorList>
    </citation>
    <scope>NUCLEOTIDE SEQUENCE [LARGE SCALE MRNA]</scope>
    <source>
        <tissue>Brain</tissue>
    </source>
</reference>
<reference key="6">
    <citation type="journal article" date="2002" name="Curr. Opin. Neurobiol.">
        <title>Receptors for bitter and sweet taste.</title>
        <authorList>
            <person name="Montmayeur J.-P."/>
            <person name="Matsunami H."/>
        </authorList>
    </citation>
    <scope>REVIEW</scope>
</reference>
<reference key="7">
    <citation type="journal article" date="2002" name="J. Biol. Chem.">
        <title>Molecular mechanisms of bitter and sweet taste transduction.</title>
        <authorList>
            <person name="Margolskee R.F."/>
        </authorList>
    </citation>
    <scope>REVIEW</scope>
</reference>
<reference key="8">
    <citation type="journal article" date="2003" name="Cell">
        <title>Coding of sweet, bitter, and umami tastes: different receptor cells sharing similar signaling pathways.</title>
        <authorList>
            <person name="Zhang Y."/>
            <person name="Hoon M.A."/>
            <person name="Chandrashekar J."/>
            <person name="Mueller K.L."/>
            <person name="Cook B."/>
            <person name="Wu D."/>
            <person name="Zuker C.S."/>
            <person name="Ryba N.J."/>
        </authorList>
    </citation>
    <scope>REVIEW</scope>
</reference>